<gene>
    <name evidence="1" type="primary">rps19</name>
    <name type="ordered locus">PF1821</name>
</gene>
<accession>Q8U002</accession>
<evidence type="ECO:0000255" key="1">
    <source>
        <dbReference type="HAMAP-Rule" id="MF_00531"/>
    </source>
</evidence>
<evidence type="ECO:0000269" key="2">
    <source>
    </source>
</evidence>
<evidence type="ECO:0007744" key="3">
    <source>
        <dbReference type="PDB" id="4V6U"/>
    </source>
</evidence>
<keyword id="KW-0002">3D-structure</keyword>
<keyword id="KW-1185">Reference proteome</keyword>
<keyword id="KW-0687">Ribonucleoprotein</keyword>
<keyword id="KW-0689">Ribosomal protein</keyword>
<keyword id="KW-0694">RNA-binding</keyword>
<keyword id="KW-0699">rRNA-binding</keyword>
<comment type="function">
    <text evidence="1">Protein S19 forms a complex with S13 that binds strongly to the 16S ribosomal RNA.</text>
</comment>
<comment type="subunit">
    <text evidence="2">Part of the 30S ribosomal subunit.</text>
</comment>
<comment type="similarity">
    <text evidence="1">Belongs to the universal ribosomal protein uS19 family.</text>
</comment>
<protein>
    <recommendedName>
        <fullName evidence="1">Small ribosomal subunit protein uS19</fullName>
    </recommendedName>
    <alternativeName>
        <fullName>30S ribosomal protein S19</fullName>
    </alternativeName>
</protein>
<name>RS19_PYRFU</name>
<proteinExistence type="evidence at protein level"/>
<organism>
    <name type="scientific">Pyrococcus furiosus (strain ATCC 43587 / DSM 3638 / JCM 8422 / Vc1)</name>
    <dbReference type="NCBI Taxonomy" id="186497"/>
    <lineage>
        <taxon>Archaea</taxon>
        <taxon>Methanobacteriati</taxon>
        <taxon>Methanobacteriota</taxon>
        <taxon>Thermococci</taxon>
        <taxon>Thermococcales</taxon>
        <taxon>Thermococcaceae</taxon>
        <taxon>Pyrococcus</taxon>
    </lineage>
</organism>
<sequence>MARKEFRYRGYTLEQLMNMSLEELARLFPARQRRSLKRGLTPEQKKLLRKIRLAKKGKYKKPIRTHCRDMIILPEMVGLTIYVHNGKEFVPVEIKPEMIGHYLGEFAPTRKKVEHGAPGVGATRSSMFVAVK</sequence>
<reference key="1">
    <citation type="journal article" date="1999" name="Genetics">
        <title>Divergence of the hyperthermophilic archaea Pyrococcus furiosus and P. horikoshii inferred from complete genomic sequences.</title>
        <authorList>
            <person name="Maeder D.L."/>
            <person name="Weiss R.B."/>
            <person name="Dunn D.M."/>
            <person name="Cherry J.L."/>
            <person name="Gonzalez J.M."/>
            <person name="DiRuggiero J."/>
            <person name="Robb F.T."/>
        </authorList>
    </citation>
    <scope>NUCLEOTIDE SEQUENCE [LARGE SCALE GENOMIC DNA]</scope>
    <source>
        <strain>ATCC 43587 / DSM 3638 / JCM 8422 / Vc1</strain>
    </source>
</reference>
<reference evidence="3" key="2">
    <citation type="journal article" date="2013" name="Nucleic Acids Res.">
        <title>Promiscuous behaviour of archaeal ribosomal proteins: implications for eukaryotic ribosome evolution.</title>
        <authorList>
            <person name="Armache J.P."/>
            <person name="Anger A.M."/>
            <person name="Marquez V."/>
            <person name="Franckenberg S."/>
            <person name="Frohlich T."/>
            <person name="Villa E."/>
            <person name="Berninghausen O."/>
            <person name="Thomm M."/>
            <person name="Arnold G.J."/>
            <person name="Beckmann R."/>
            <person name="Wilson D.N."/>
        </authorList>
    </citation>
    <scope>STRUCTURE BY ELECTRON MICROSCOPY (6.60 ANGSTROMS) IN THE 70S RIBOSOME</scope>
    <scope>SUBUNIT</scope>
</reference>
<dbReference type="EMBL" id="AE009950">
    <property type="protein sequence ID" value="AAL81945.1"/>
    <property type="molecule type" value="Genomic_DNA"/>
</dbReference>
<dbReference type="PDB" id="4V6U">
    <property type="method" value="EM"/>
    <property type="resolution" value="6.60 A"/>
    <property type="chains" value="AT=1-132"/>
</dbReference>
<dbReference type="PDB" id="5JB3">
    <property type="method" value="EM"/>
    <property type="resolution" value="5.34 A"/>
    <property type="chains" value="T=1-132"/>
</dbReference>
<dbReference type="PDB" id="5JBH">
    <property type="method" value="EM"/>
    <property type="resolution" value="5.34 A"/>
    <property type="chains" value="T=1-132"/>
</dbReference>
<dbReference type="PDBsum" id="4V6U"/>
<dbReference type="PDBsum" id="5JB3"/>
<dbReference type="PDBsum" id="5JBH"/>
<dbReference type="EMDB" id="EMD-50611"/>
<dbReference type="EMDB" id="EMD-50612"/>
<dbReference type="EMDB" id="EMD-50613"/>
<dbReference type="EMDB" id="EMD-8149"/>
<dbReference type="SMR" id="Q8U002"/>
<dbReference type="STRING" id="186497.PF1821"/>
<dbReference type="PaxDb" id="186497-PF1821"/>
<dbReference type="GeneID" id="1469700"/>
<dbReference type="KEGG" id="pfu:PF1821"/>
<dbReference type="PATRIC" id="fig|186497.12.peg.1892"/>
<dbReference type="eggNOG" id="arCOG04099">
    <property type="taxonomic scope" value="Archaea"/>
</dbReference>
<dbReference type="HOGENOM" id="CLU_097347_1_1_2"/>
<dbReference type="OrthoDB" id="30559at2157"/>
<dbReference type="PhylomeDB" id="Q8U002"/>
<dbReference type="Proteomes" id="UP000001013">
    <property type="component" value="Chromosome"/>
</dbReference>
<dbReference type="GO" id="GO:0022627">
    <property type="term" value="C:cytosolic small ribosomal subunit"/>
    <property type="evidence" value="ECO:0007669"/>
    <property type="project" value="TreeGrafter"/>
</dbReference>
<dbReference type="GO" id="GO:0019843">
    <property type="term" value="F:rRNA binding"/>
    <property type="evidence" value="ECO:0007669"/>
    <property type="project" value="UniProtKB-UniRule"/>
</dbReference>
<dbReference type="GO" id="GO:0003735">
    <property type="term" value="F:structural constituent of ribosome"/>
    <property type="evidence" value="ECO:0007669"/>
    <property type="project" value="InterPro"/>
</dbReference>
<dbReference type="GO" id="GO:0000028">
    <property type="term" value="P:ribosomal small subunit assembly"/>
    <property type="evidence" value="ECO:0007669"/>
    <property type="project" value="TreeGrafter"/>
</dbReference>
<dbReference type="GO" id="GO:0006412">
    <property type="term" value="P:translation"/>
    <property type="evidence" value="ECO:0007669"/>
    <property type="project" value="UniProtKB-UniRule"/>
</dbReference>
<dbReference type="FunFam" id="3.30.860.10:FF:000002">
    <property type="entry name" value="40S ribosomal protein S15"/>
    <property type="match status" value="1"/>
</dbReference>
<dbReference type="Gene3D" id="3.30.860.10">
    <property type="entry name" value="30s Ribosomal Protein S19, Chain A"/>
    <property type="match status" value="1"/>
</dbReference>
<dbReference type="HAMAP" id="MF_00531">
    <property type="entry name" value="Ribosomal_uS19"/>
    <property type="match status" value="1"/>
</dbReference>
<dbReference type="InterPro" id="IPR002222">
    <property type="entry name" value="Ribosomal_uS19"/>
</dbReference>
<dbReference type="InterPro" id="IPR020934">
    <property type="entry name" value="Ribosomal_uS19_CS"/>
</dbReference>
<dbReference type="InterPro" id="IPR005713">
    <property type="entry name" value="Ribosomal_uS19_euk/arc"/>
</dbReference>
<dbReference type="InterPro" id="IPR023575">
    <property type="entry name" value="Ribosomal_uS19_SF"/>
</dbReference>
<dbReference type="NCBIfam" id="NF003121">
    <property type="entry name" value="PRK04038.1"/>
    <property type="match status" value="1"/>
</dbReference>
<dbReference type="NCBIfam" id="TIGR01025">
    <property type="entry name" value="uS19_arch"/>
    <property type="match status" value="1"/>
</dbReference>
<dbReference type="PANTHER" id="PTHR11880">
    <property type="entry name" value="RIBOSOMAL PROTEIN S19P FAMILY MEMBER"/>
    <property type="match status" value="1"/>
</dbReference>
<dbReference type="PANTHER" id="PTHR11880:SF2">
    <property type="entry name" value="SMALL RIBOSOMAL SUBUNIT PROTEIN US19"/>
    <property type="match status" value="1"/>
</dbReference>
<dbReference type="Pfam" id="PF00203">
    <property type="entry name" value="Ribosomal_S19"/>
    <property type="match status" value="1"/>
</dbReference>
<dbReference type="PIRSF" id="PIRSF002144">
    <property type="entry name" value="Ribosomal_S19"/>
    <property type="match status" value="1"/>
</dbReference>
<dbReference type="PRINTS" id="PR00975">
    <property type="entry name" value="RIBOSOMALS19"/>
</dbReference>
<dbReference type="SUPFAM" id="SSF54570">
    <property type="entry name" value="Ribosomal protein S19"/>
    <property type="match status" value="1"/>
</dbReference>
<dbReference type="PROSITE" id="PS00323">
    <property type="entry name" value="RIBOSOMAL_S19"/>
    <property type="match status" value="1"/>
</dbReference>
<feature type="chain" id="PRO_0000130011" description="Small ribosomal subunit protein uS19">
    <location>
        <begin position="1"/>
        <end position="132"/>
    </location>
</feature>